<feature type="chain" id="PRO_0000454026" description="Xylan O-acetyltransferase 2">
    <location>
        <begin position="1"/>
        <end position="500"/>
    </location>
</feature>
<feature type="topological domain" description="Cytoplasmic" evidence="9">
    <location>
        <begin position="1"/>
        <end position="25"/>
    </location>
</feature>
<feature type="transmembrane region" description="Helical; Signal-anchor for type II membrane protein" evidence="3">
    <location>
        <begin position="26"/>
        <end position="43"/>
    </location>
</feature>
<feature type="topological domain" description="Lumenal" evidence="9">
    <location>
        <begin position="44"/>
        <end position="500"/>
    </location>
</feature>
<feature type="region of interest" description="Disordered" evidence="5">
    <location>
        <begin position="84"/>
        <end position="116"/>
    </location>
</feature>
<feature type="short sequence motif" description="GDS motif" evidence="10">
    <location>
        <begin position="218"/>
        <end position="220"/>
    </location>
</feature>
<feature type="short sequence motif" description="DXXH motif" evidence="10">
    <location>
        <begin position="467"/>
        <end position="470"/>
    </location>
</feature>
<feature type="compositionally biased region" description="Basic and acidic residues" evidence="5">
    <location>
        <begin position="91"/>
        <end position="102"/>
    </location>
</feature>
<feature type="compositionally biased region" description="Basic residues" evidence="5">
    <location>
        <begin position="103"/>
        <end position="116"/>
    </location>
</feature>
<feature type="active site" description="Nucleophile" evidence="2">
    <location>
        <position position="220"/>
    </location>
</feature>
<feature type="active site" description="Proton donor" evidence="2">
    <location>
        <position position="467"/>
    </location>
</feature>
<feature type="active site" description="Proton acceptor" evidence="2">
    <location>
        <position position="470"/>
    </location>
</feature>
<feature type="glycosylation site" description="N-linked (GlcNAc...) asparagine" evidence="4">
    <location>
        <position position="144"/>
    </location>
</feature>
<feature type="glycosylation site" description="N-linked (GlcNAc...) asparagine" evidence="4">
    <location>
        <position position="154"/>
    </location>
</feature>
<feature type="glycosylation site" description="N-linked (GlcNAc...) asparagine" evidence="4">
    <location>
        <position position="260"/>
    </location>
</feature>
<feature type="glycosylation site" description="N-linked (GlcNAc...) asparagine" evidence="4">
    <location>
        <position position="416"/>
    </location>
</feature>
<feature type="disulfide bond" evidence="2">
    <location>
        <begin position="143"/>
        <end position="194"/>
    </location>
</feature>
<feature type="disulfide bond" evidence="2">
    <location>
        <begin position="165"/>
        <end position="231"/>
    </location>
</feature>
<feature type="disulfide bond" evidence="2">
    <location>
        <begin position="174"/>
        <end position="472"/>
    </location>
</feature>
<feature type="disulfide bond" evidence="2">
    <location>
        <begin position="388"/>
        <end position="468"/>
    </location>
</feature>
<reference key="1">
    <citation type="journal article" date="2018" name="Planta">
        <title>Biochemical characterization of rice xylan O-acetyltransferases.</title>
        <authorList>
            <person name="Zhong R."/>
            <person name="Cui D."/>
            <person name="Dasher R.L."/>
            <person name="Ye Z.H."/>
        </authorList>
    </citation>
    <scope>NUCLEOTIDE SEQUENCE [MRNA]</scope>
    <scope>FUNCTION</scope>
    <scope>CATALYTIC ACTIVITY</scope>
    <scope>BIOPHYSICOCHEMICAL PROPERTIES</scope>
    <scope>TISSUE SPECIFICITY</scope>
</reference>
<reference key="2">
    <citation type="journal article" date="2005" name="Mol. Genet. Genomics">
        <title>A fine physical map of the rice chromosome 5.</title>
        <authorList>
            <person name="Cheng C.-H."/>
            <person name="Chung M.C."/>
            <person name="Liu S.-M."/>
            <person name="Chen S.-K."/>
            <person name="Kao F.Y."/>
            <person name="Lin S.-J."/>
            <person name="Hsiao S.-H."/>
            <person name="Tseng I.C."/>
            <person name="Hsing Y.-I.C."/>
            <person name="Wu H.-P."/>
            <person name="Chen C.-S."/>
            <person name="Shaw J.-F."/>
            <person name="Wu J."/>
            <person name="Matsumoto T."/>
            <person name="Sasaki T."/>
            <person name="Chen H.-C."/>
            <person name="Chow T.-Y."/>
        </authorList>
    </citation>
    <scope>NUCLEOTIDE SEQUENCE [LARGE SCALE GENOMIC DNA]</scope>
    <source>
        <strain>cv. Nipponbare</strain>
    </source>
</reference>
<reference key="3">
    <citation type="journal article" date="2005" name="Nature">
        <title>The map-based sequence of the rice genome.</title>
        <authorList>
            <consortium name="International rice genome sequencing project (IRGSP)"/>
        </authorList>
    </citation>
    <scope>NUCLEOTIDE SEQUENCE [LARGE SCALE GENOMIC DNA]</scope>
    <source>
        <strain>cv. Nipponbare</strain>
    </source>
</reference>
<reference key="4">
    <citation type="journal article" date="2008" name="Nucleic Acids Res.">
        <title>The rice annotation project database (RAP-DB): 2008 update.</title>
        <authorList>
            <consortium name="The rice annotation project (RAP)"/>
        </authorList>
    </citation>
    <scope>GENOME REANNOTATION</scope>
    <source>
        <strain>cv. Nipponbare</strain>
    </source>
</reference>
<reference key="5">
    <citation type="journal article" date="2013" name="Rice">
        <title>Improvement of the Oryza sativa Nipponbare reference genome using next generation sequence and optical map data.</title>
        <authorList>
            <person name="Kawahara Y."/>
            <person name="de la Bastide M."/>
            <person name="Hamilton J.P."/>
            <person name="Kanamori H."/>
            <person name="McCombie W.R."/>
            <person name="Ouyang S."/>
            <person name="Schwartz D.C."/>
            <person name="Tanaka T."/>
            <person name="Wu J."/>
            <person name="Zhou S."/>
            <person name="Childs K.L."/>
            <person name="Davidson R.M."/>
            <person name="Lin H."/>
            <person name="Quesada-Ocampo L."/>
            <person name="Vaillancourt B."/>
            <person name="Sakai H."/>
            <person name="Lee S.S."/>
            <person name="Kim J."/>
            <person name="Numa H."/>
            <person name="Itoh T."/>
            <person name="Buell C.R."/>
            <person name="Matsumoto T."/>
        </authorList>
    </citation>
    <scope>GENOME REANNOTATION</scope>
    <source>
        <strain>cv. Nipponbare</strain>
    </source>
</reference>
<reference key="6">
    <citation type="journal article" date="2005" name="PLoS Biol.">
        <title>The genomes of Oryza sativa: a history of duplications.</title>
        <authorList>
            <person name="Yu J."/>
            <person name="Wang J."/>
            <person name="Lin W."/>
            <person name="Li S."/>
            <person name="Li H."/>
            <person name="Zhou J."/>
            <person name="Ni P."/>
            <person name="Dong W."/>
            <person name="Hu S."/>
            <person name="Zeng C."/>
            <person name="Zhang J."/>
            <person name="Zhang Y."/>
            <person name="Li R."/>
            <person name="Xu Z."/>
            <person name="Li S."/>
            <person name="Li X."/>
            <person name="Zheng H."/>
            <person name="Cong L."/>
            <person name="Lin L."/>
            <person name="Yin J."/>
            <person name="Geng J."/>
            <person name="Li G."/>
            <person name="Shi J."/>
            <person name="Liu J."/>
            <person name="Lv H."/>
            <person name="Li J."/>
            <person name="Wang J."/>
            <person name="Deng Y."/>
            <person name="Ran L."/>
            <person name="Shi X."/>
            <person name="Wang X."/>
            <person name="Wu Q."/>
            <person name="Li C."/>
            <person name="Ren X."/>
            <person name="Wang J."/>
            <person name="Wang X."/>
            <person name="Li D."/>
            <person name="Liu D."/>
            <person name="Zhang X."/>
            <person name="Ji Z."/>
            <person name="Zhao W."/>
            <person name="Sun Y."/>
            <person name="Zhang Z."/>
            <person name="Bao J."/>
            <person name="Han Y."/>
            <person name="Dong L."/>
            <person name="Ji J."/>
            <person name="Chen P."/>
            <person name="Wu S."/>
            <person name="Liu J."/>
            <person name="Xiao Y."/>
            <person name="Bu D."/>
            <person name="Tan J."/>
            <person name="Yang L."/>
            <person name="Ye C."/>
            <person name="Zhang J."/>
            <person name="Xu J."/>
            <person name="Zhou Y."/>
            <person name="Yu Y."/>
            <person name="Zhang B."/>
            <person name="Zhuang S."/>
            <person name="Wei H."/>
            <person name="Liu B."/>
            <person name="Lei M."/>
            <person name="Yu H."/>
            <person name="Li Y."/>
            <person name="Xu H."/>
            <person name="Wei S."/>
            <person name="He X."/>
            <person name="Fang L."/>
            <person name="Zhang Z."/>
            <person name="Zhang Y."/>
            <person name="Huang X."/>
            <person name="Su Z."/>
            <person name="Tong W."/>
            <person name="Li J."/>
            <person name="Tong Z."/>
            <person name="Li S."/>
            <person name="Ye J."/>
            <person name="Wang L."/>
            <person name="Fang L."/>
            <person name="Lei T."/>
            <person name="Chen C.-S."/>
            <person name="Chen H.-C."/>
            <person name="Xu Z."/>
            <person name="Li H."/>
            <person name="Huang H."/>
            <person name="Zhang F."/>
            <person name="Xu H."/>
            <person name="Li N."/>
            <person name="Zhao C."/>
            <person name="Li S."/>
            <person name="Dong L."/>
            <person name="Huang Y."/>
            <person name="Li L."/>
            <person name="Xi Y."/>
            <person name="Qi Q."/>
            <person name="Li W."/>
            <person name="Zhang B."/>
            <person name="Hu W."/>
            <person name="Zhang Y."/>
            <person name="Tian X."/>
            <person name="Jiao Y."/>
            <person name="Liang X."/>
            <person name="Jin J."/>
            <person name="Gao L."/>
            <person name="Zheng W."/>
            <person name="Hao B."/>
            <person name="Liu S.-M."/>
            <person name="Wang W."/>
            <person name="Yuan L."/>
            <person name="Cao M."/>
            <person name="McDermott J."/>
            <person name="Samudrala R."/>
            <person name="Wang J."/>
            <person name="Wong G.K.-S."/>
            <person name="Yang H."/>
        </authorList>
    </citation>
    <scope>NUCLEOTIDE SEQUENCE [LARGE SCALE GENOMIC DNA]</scope>
    <source>
        <strain>cv. Nipponbare</strain>
    </source>
</reference>
<reference key="7">
    <citation type="journal article" date="2017" name="Plant Physiol.">
        <title>Two trichome birefringence-like proteins mediate xylan acetylation, which is essential for leaf blight resistance in rice.</title>
        <authorList>
            <person name="Gao Y."/>
            <person name="He C."/>
            <person name="Zhang D."/>
            <person name="Liu X."/>
            <person name="Xu Z."/>
            <person name="Tian Y."/>
            <person name="Liu X.H."/>
            <person name="Zang S."/>
            <person name="Pauly M."/>
            <person name="Zhou Y."/>
            <person name="Zhang B."/>
        </authorList>
    </citation>
    <scope>GENE FAMILY</scope>
    <scope>NOMENCLATURE</scope>
</reference>
<protein>
    <recommendedName>
        <fullName evidence="8">Xylan O-acetyltransferase 2</fullName>
        <ecNumber evidence="6">2.3.1.-</ecNumber>
    </recommendedName>
    <alternativeName>
        <fullName evidence="7">Protein trichome birefringence-like 11</fullName>
        <shortName evidence="7">OsTBL11</shortName>
    </alternativeName>
</protein>
<evidence type="ECO:0000250" key="1">
    <source>
        <dbReference type="UniProtKB" id="Q2QYU2"/>
    </source>
</evidence>
<evidence type="ECO:0000250" key="2">
    <source>
        <dbReference type="UniProtKB" id="Q9LY46"/>
    </source>
</evidence>
<evidence type="ECO:0000255" key="3"/>
<evidence type="ECO:0000255" key="4">
    <source>
        <dbReference type="PROSITE-ProRule" id="PRU00498"/>
    </source>
</evidence>
<evidence type="ECO:0000256" key="5">
    <source>
        <dbReference type="SAM" id="MobiDB-lite"/>
    </source>
</evidence>
<evidence type="ECO:0000269" key="6">
    <source>
    </source>
</evidence>
<evidence type="ECO:0000303" key="7">
    <source>
    </source>
</evidence>
<evidence type="ECO:0000303" key="8">
    <source>
    </source>
</evidence>
<evidence type="ECO:0000305" key="9"/>
<evidence type="ECO:0000305" key="10">
    <source>
    </source>
</evidence>
<evidence type="ECO:0000312" key="11">
    <source>
        <dbReference type="EMBL" id="BAS94482.1"/>
    </source>
</evidence>
<evidence type="ECO:0000312" key="12">
    <source>
        <dbReference type="EMBL" id="EEE64048.1"/>
    </source>
</evidence>
<gene>
    <name evidence="8" type="primary">XOAT2</name>
    <name evidence="7" type="synonym">TBL11</name>
    <name evidence="11" type="ordered locus">Os05g0470000</name>
    <name evidence="9" type="ordered locus">LOC_Os05g39350</name>
    <name evidence="12" type="ORF">OsJ_18877</name>
</gene>
<keyword id="KW-1015">Disulfide bond</keyword>
<keyword id="KW-0325">Glycoprotein</keyword>
<keyword id="KW-0333">Golgi apparatus</keyword>
<keyword id="KW-0472">Membrane</keyword>
<keyword id="KW-1185">Reference proteome</keyword>
<keyword id="KW-0735">Signal-anchor</keyword>
<keyword id="KW-0808">Transferase</keyword>
<keyword id="KW-0812">Transmembrane</keyword>
<keyword id="KW-1133">Transmembrane helix</keyword>
<comment type="function">
    <text evidence="2 6">Xylan acetyltransferase required for 2-O- and 3-O-monoacetylation of xylosyl residues in xylan (PubMed:29569182). Catalyzes the 2-O-acetylation of xylan, followed by nonenzymatic acetyl migration to the O-3 position, resulting in products that are monoacetylated at both O-2 and O-3 positions (By similarity).</text>
</comment>
<comment type="biophysicochemical properties">
    <kinetics>
        <KM evidence="6">210 uM for xylohexaose</KM>
        <Vmax evidence="6">38.2 pmol/min/mg enzyme with xylohexaose as substrate</Vmax>
    </kinetics>
</comment>
<comment type="subcellular location">
    <subcellularLocation>
        <location evidence="1">Golgi apparatus membrane</location>
        <topology evidence="3">Single-pass type II membrane protein</topology>
    </subcellularLocation>
</comment>
<comment type="tissue specificity">
    <text evidence="6">Expressed at low levels in roots and leaves.</text>
</comment>
<comment type="similarity">
    <text evidence="9">Belongs to the PC-esterase family. TBL subfamily.</text>
</comment>
<comment type="sequence caution" evidence="9">
    <conflict type="erroneous initiation">
        <sequence resource="EMBL-CDS" id="BAF17721"/>
    </conflict>
    <text>Extended N-terminus.</text>
</comment>
<dbReference type="EC" id="2.3.1.-" evidence="6"/>
<dbReference type="EMBL" id="MH037016">
    <property type="protein sequence ID" value="AVR54506.1"/>
    <property type="molecule type" value="mRNA"/>
</dbReference>
<dbReference type="EMBL" id="AP008211">
    <property type="protein sequence ID" value="BAF17721.1"/>
    <property type="status" value="ALT_INIT"/>
    <property type="molecule type" value="Genomic_DNA"/>
</dbReference>
<dbReference type="EMBL" id="AP014961">
    <property type="protein sequence ID" value="BAS94482.1"/>
    <property type="molecule type" value="Genomic_DNA"/>
</dbReference>
<dbReference type="EMBL" id="CM000142">
    <property type="protein sequence ID" value="EEE64048.1"/>
    <property type="molecule type" value="Genomic_DNA"/>
</dbReference>
<dbReference type="RefSeq" id="XP_015637498.1">
    <property type="nucleotide sequence ID" value="XM_015782012.1"/>
</dbReference>
<dbReference type="SMR" id="B9FKP6"/>
<dbReference type="GlyCosmos" id="B9FKP6">
    <property type="glycosylation" value="4 sites, No reported glycans"/>
</dbReference>
<dbReference type="PaxDb" id="39947-B9FKP6"/>
<dbReference type="EnsemblPlants" id="Os05t0470000-01">
    <property type="protein sequence ID" value="Os05t0470000-01"/>
    <property type="gene ID" value="Os05g0470000"/>
</dbReference>
<dbReference type="Gramene" id="Os05t0470000-01">
    <property type="protein sequence ID" value="Os05t0470000-01"/>
    <property type="gene ID" value="Os05g0470000"/>
</dbReference>
<dbReference type="KEGG" id="dosa:Os05g0470000"/>
<dbReference type="eggNOG" id="ENOG502SJAQ">
    <property type="taxonomic scope" value="Eukaryota"/>
</dbReference>
<dbReference type="HOGENOM" id="CLU_020953_3_2_1"/>
<dbReference type="InParanoid" id="B9FKP6"/>
<dbReference type="OMA" id="CEYLTAQ"/>
<dbReference type="OrthoDB" id="1932925at2759"/>
<dbReference type="Proteomes" id="UP000000763">
    <property type="component" value="Chromosome 5"/>
</dbReference>
<dbReference type="Proteomes" id="UP000007752">
    <property type="component" value="Chromosome 5"/>
</dbReference>
<dbReference type="Proteomes" id="UP000059680">
    <property type="component" value="Chromosome 5"/>
</dbReference>
<dbReference type="GO" id="GO:0005794">
    <property type="term" value="C:Golgi apparatus"/>
    <property type="evidence" value="ECO:0000318"/>
    <property type="project" value="GO_Central"/>
</dbReference>
<dbReference type="GO" id="GO:0000139">
    <property type="term" value="C:Golgi membrane"/>
    <property type="evidence" value="ECO:0000250"/>
    <property type="project" value="UniProtKB"/>
</dbReference>
<dbReference type="GO" id="GO:0016413">
    <property type="term" value="F:O-acetyltransferase activity"/>
    <property type="evidence" value="ECO:0000318"/>
    <property type="project" value="GO_Central"/>
</dbReference>
<dbReference type="GO" id="GO:1990538">
    <property type="term" value="F:xylan O-acetyltransferase activity"/>
    <property type="evidence" value="ECO:0000314"/>
    <property type="project" value="UniProtKB"/>
</dbReference>
<dbReference type="GO" id="GO:1990937">
    <property type="term" value="P:xylan acetylation"/>
    <property type="evidence" value="ECO:0000314"/>
    <property type="project" value="UniProtKB"/>
</dbReference>
<dbReference type="InterPro" id="IPR029962">
    <property type="entry name" value="TBL"/>
</dbReference>
<dbReference type="InterPro" id="IPR026057">
    <property type="entry name" value="TBL_C"/>
</dbReference>
<dbReference type="InterPro" id="IPR025846">
    <property type="entry name" value="TBL_N"/>
</dbReference>
<dbReference type="PANTHER" id="PTHR32285">
    <property type="entry name" value="PROTEIN TRICHOME BIREFRINGENCE-LIKE 9-RELATED"/>
    <property type="match status" value="1"/>
</dbReference>
<dbReference type="PANTHER" id="PTHR32285:SF10">
    <property type="entry name" value="XYLAN O-ACETYLTRANSFERASE 1"/>
    <property type="match status" value="1"/>
</dbReference>
<dbReference type="Pfam" id="PF13839">
    <property type="entry name" value="PC-Esterase"/>
    <property type="match status" value="1"/>
</dbReference>
<dbReference type="Pfam" id="PF14416">
    <property type="entry name" value="PMR5N"/>
    <property type="match status" value="1"/>
</dbReference>
<organism>
    <name type="scientific">Oryza sativa subsp. japonica</name>
    <name type="common">Rice</name>
    <dbReference type="NCBI Taxonomy" id="39947"/>
    <lineage>
        <taxon>Eukaryota</taxon>
        <taxon>Viridiplantae</taxon>
        <taxon>Streptophyta</taxon>
        <taxon>Embryophyta</taxon>
        <taxon>Tracheophyta</taxon>
        <taxon>Spermatophyta</taxon>
        <taxon>Magnoliopsida</taxon>
        <taxon>Liliopsida</taxon>
        <taxon>Poales</taxon>
        <taxon>Poaceae</taxon>
        <taxon>BOP clade</taxon>
        <taxon>Oryzoideae</taxon>
        <taxon>Oryzeae</taxon>
        <taxon>Oryzinae</taxon>
        <taxon>Oryza</taxon>
        <taxon>Oryza sativa</taxon>
    </lineage>
</organism>
<accession>B9FKP6</accession>
<accession>A0A0P0WNF8</accession>
<accession>Q0DHF2</accession>
<sequence length="500" mass="56368">MGLPGRRNPLLSARRAAASLRRSRRLPVYVAAVFFVASVLLMFRDEILYLTTARSPSSSLPTTGGSAGGAGLARKEELVSVNKPVLLGHGGKPEKHHSVTERHRPKVSAKRRPNKKAAKAARKKFMASPSVAAGAEVNVPETCNLSKGKWVFDNATYPLYREQECEYLTAQVTCTRNGRRDDGYQKWRWQPRDCDLPLAFDARLFMERLRGKRLMFVGDSLNRNQWESMVCLVRPALSPGKSYVTWWDGQRVVLHAWEYNATVEFYWAPFLVESNSDDPKAHSIRDRVIKPEAIAAHAGDWVGVDYLVFNTYIWWMNTVNMKVVRPTGKTWEEYDEVGRIEAYRRVLDTWATWVNDNVDPARTSVFFMSVSPLHISPEAWGNPGGVRCAKEDAPVQNWHGPLWLGTDWDMFRAARNASRAAGRVPVTFVDVTAMSELRKDGHTSVHTIRQGRVLTPEQQADPATYADCIHWCLPGVPDVWNLMLYARILSRPPAAAGHVA</sequence>
<name>XOAT2_ORYSJ</name>
<proteinExistence type="evidence at protein level"/>